<feature type="chain" id="PRO_0000178290" description="Small ribosomal subunit protein bS21">
    <location>
        <begin position="1"/>
        <end position="67"/>
    </location>
</feature>
<sequence>MVTVIVQEGEPIEKVLKRFKARVEQEQILTELKRREYYEPPSERKKKRERNRRKKILKALKKQQQLI</sequence>
<evidence type="ECO:0000305" key="1"/>
<comment type="similarity">
    <text evidence="1">Belongs to the bacterial ribosomal protein bS21 family.</text>
</comment>
<gene>
    <name type="primary">rpsU</name>
    <name type="ordered locus">aq_867</name>
    <name type="ORF">aq_867A</name>
</gene>
<proteinExistence type="inferred from homology"/>
<organism>
    <name type="scientific">Aquifex aeolicus (strain VF5)</name>
    <dbReference type="NCBI Taxonomy" id="224324"/>
    <lineage>
        <taxon>Bacteria</taxon>
        <taxon>Pseudomonadati</taxon>
        <taxon>Aquificota</taxon>
        <taxon>Aquificia</taxon>
        <taxon>Aquificales</taxon>
        <taxon>Aquificaceae</taxon>
        <taxon>Aquifex</taxon>
    </lineage>
</organism>
<name>RS21_AQUAE</name>
<accession>O67028</accession>
<protein>
    <recommendedName>
        <fullName evidence="1">Small ribosomal subunit protein bS21</fullName>
    </recommendedName>
    <alternativeName>
        <fullName>30S ribosomal protein S21</fullName>
    </alternativeName>
</protein>
<reference key="1">
    <citation type="journal article" date="1998" name="Nature">
        <title>The complete genome of the hyperthermophilic bacterium Aquifex aeolicus.</title>
        <authorList>
            <person name="Deckert G."/>
            <person name="Warren P.V."/>
            <person name="Gaasterland T."/>
            <person name="Young W.G."/>
            <person name="Lenox A.L."/>
            <person name="Graham D.E."/>
            <person name="Overbeek R."/>
            <person name="Snead M.A."/>
            <person name="Keller M."/>
            <person name="Aujay M."/>
            <person name="Huber R."/>
            <person name="Feldman R.A."/>
            <person name="Short J.M."/>
            <person name="Olsen G.J."/>
            <person name="Swanson R.V."/>
        </authorList>
    </citation>
    <scope>NUCLEOTIDE SEQUENCE [LARGE SCALE GENOMIC DNA]</scope>
    <source>
        <strain>VF5</strain>
    </source>
</reference>
<dbReference type="EMBL" id="AE000657">
    <property type="protein sequence ID" value="AAC06990.1"/>
    <property type="molecule type" value="Genomic_DNA"/>
</dbReference>
<dbReference type="PIR" id="A70375">
    <property type="entry name" value="A70375"/>
</dbReference>
<dbReference type="RefSeq" id="NP_213589.1">
    <property type="nucleotide sequence ID" value="NC_000918.1"/>
</dbReference>
<dbReference type="RefSeq" id="WP_010880527.1">
    <property type="nucleotide sequence ID" value="NC_000918.1"/>
</dbReference>
<dbReference type="SMR" id="O67028"/>
<dbReference type="STRING" id="224324.aq_867a"/>
<dbReference type="EnsemblBacteria" id="AAC06990">
    <property type="protein sequence ID" value="AAC06990"/>
    <property type="gene ID" value="aq_867a"/>
</dbReference>
<dbReference type="KEGG" id="aae:aq_867a"/>
<dbReference type="eggNOG" id="COG0828">
    <property type="taxonomic scope" value="Bacteria"/>
</dbReference>
<dbReference type="HOGENOM" id="CLU_159258_1_2_0"/>
<dbReference type="InParanoid" id="O67028"/>
<dbReference type="OrthoDB" id="9799244at2"/>
<dbReference type="Proteomes" id="UP000000798">
    <property type="component" value="Chromosome"/>
</dbReference>
<dbReference type="GO" id="GO:1990904">
    <property type="term" value="C:ribonucleoprotein complex"/>
    <property type="evidence" value="ECO:0007669"/>
    <property type="project" value="UniProtKB-KW"/>
</dbReference>
<dbReference type="GO" id="GO:0005840">
    <property type="term" value="C:ribosome"/>
    <property type="evidence" value="ECO:0007669"/>
    <property type="project" value="UniProtKB-KW"/>
</dbReference>
<dbReference type="GO" id="GO:0003735">
    <property type="term" value="F:structural constituent of ribosome"/>
    <property type="evidence" value="ECO:0007669"/>
    <property type="project" value="InterPro"/>
</dbReference>
<dbReference type="GO" id="GO:0006412">
    <property type="term" value="P:translation"/>
    <property type="evidence" value="ECO:0007669"/>
    <property type="project" value="UniProtKB-UniRule"/>
</dbReference>
<dbReference type="Gene3D" id="1.20.5.1150">
    <property type="entry name" value="Ribosomal protein S8"/>
    <property type="match status" value="1"/>
</dbReference>
<dbReference type="HAMAP" id="MF_00358">
    <property type="entry name" value="Ribosomal_bS21"/>
    <property type="match status" value="1"/>
</dbReference>
<dbReference type="InterPro" id="IPR001911">
    <property type="entry name" value="Ribosomal_bS21"/>
</dbReference>
<dbReference type="InterPro" id="IPR038380">
    <property type="entry name" value="Ribosomal_bS21_sf"/>
</dbReference>
<dbReference type="NCBIfam" id="TIGR00030">
    <property type="entry name" value="S21p"/>
    <property type="match status" value="1"/>
</dbReference>
<dbReference type="PANTHER" id="PTHR21109">
    <property type="entry name" value="MITOCHONDRIAL 28S RIBOSOMAL PROTEIN S21"/>
    <property type="match status" value="1"/>
</dbReference>
<dbReference type="PANTHER" id="PTHR21109:SF22">
    <property type="entry name" value="SMALL RIBOSOMAL SUBUNIT PROTEIN BS21"/>
    <property type="match status" value="1"/>
</dbReference>
<dbReference type="Pfam" id="PF01165">
    <property type="entry name" value="Ribosomal_S21"/>
    <property type="match status" value="1"/>
</dbReference>
<dbReference type="PRINTS" id="PR00976">
    <property type="entry name" value="RIBOSOMALS21"/>
</dbReference>
<keyword id="KW-1185">Reference proteome</keyword>
<keyword id="KW-0687">Ribonucleoprotein</keyword>
<keyword id="KW-0689">Ribosomal protein</keyword>